<protein>
    <recommendedName>
        <fullName evidence="5">Tryprostatin B 6-hydroxylase</fullName>
        <ecNumber evidence="2">1.14.14.118</ecNumber>
    </recommendedName>
    <alternativeName>
        <fullName>Fumitremorgin biosynthesis protein C</fullName>
    </alternativeName>
</protein>
<proteinExistence type="inferred from homology"/>
<feature type="chain" id="PRO_0000424120" description="Tryprostatin B 6-hydroxylase">
    <location>
        <begin position="1"/>
        <end position="548"/>
    </location>
</feature>
<feature type="transmembrane region" description="Helical" evidence="3">
    <location>
        <begin position="5"/>
        <end position="25"/>
    </location>
</feature>
<feature type="transmembrane region" description="Helical" evidence="3">
    <location>
        <begin position="35"/>
        <end position="54"/>
    </location>
</feature>
<feature type="transmembrane region" description="Helical" evidence="3">
    <location>
        <begin position="73"/>
        <end position="93"/>
    </location>
</feature>
<feature type="binding site" description="axial binding residue" evidence="1">
    <location>
        <position position="491"/>
    </location>
    <ligand>
        <name>heme</name>
        <dbReference type="ChEBI" id="CHEBI:30413"/>
    </ligand>
    <ligandPart>
        <name>Fe</name>
        <dbReference type="ChEBI" id="CHEBI:18248"/>
    </ligandPart>
</feature>
<sequence length="548" mass="63189">MPSVMKCGYLATAGLIGICIHLWYFRYGEHHLYPWRYVRFHLCLTMGVSALLYAKKPPQYTLSPGDLVKDTCLLMVTYLIGLFTSLLLYRTLFHPLRQIRGPWAAKVSSFWLSFRLRRGPSFRILHELHEEYGPVVRVGPSEVSIIHPEAIGIIYGPNSRCSKNAFYDNGHPMMSLHSYRDRTAHDQRRRVWSAGFGDRALRGYEQRMRVYRQKLFQRLEERADAESTINISQWFNFYSYDTMGDLAFARSFDMLDASRNHWAVDMLMHGMIGYRYLFPSWFFRLLATMPSLSNDWHKFIGFATDTMLRRLREQVGVPDIFASLLAPLNGRDPTDDERNMLMGDAMLIITAGSDTTATSLTSIVYELARRPDEVDKLRAEIEPIEADSDGEYQHDTLAKLPHLNGFINEAFRLHSPIPGVIPRKTPPEGIHVKDIFIPGNMTVFSPQWSMGRSEAAYVDPAIFNPERWYKHIDLVKEKSVFAPFSIGPYSCIGKPLAMMNIRTTVARLIMRFDVRFPEGEDGIRWMDAADEHFAMGIHQMPVVLTRRH</sequence>
<evidence type="ECO:0000250" key="1">
    <source>
        <dbReference type="UniProtKB" id="P04798"/>
    </source>
</evidence>
<evidence type="ECO:0000250" key="2">
    <source>
        <dbReference type="UniProtKB" id="Q4WAW5"/>
    </source>
</evidence>
<evidence type="ECO:0000255" key="3"/>
<evidence type="ECO:0000269" key="4">
    <source>
    </source>
</evidence>
<evidence type="ECO:0000303" key="5">
    <source>
    </source>
</evidence>
<evidence type="ECO:0000305" key="6"/>
<name>FTMC_NEOFI</name>
<organism>
    <name type="scientific">Neosartorya fischeri (strain ATCC 1020 / DSM 3700 / CBS 544.65 / FGSC A1164 / JCM 1740 / NRRL 181 / WB 181)</name>
    <name type="common">Aspergillus fischerianus</name>
    <dbReference type="NCBI Taxonomy" id="331117"/>
    <lineage>
        <taxon>Eukaryota</taxon>
        <taxon>Fungi</taxon>
        <taxon>Dikarya</taxon>
        <taxon>Ascomycota</taxon>
        <taxon>Pezizomycotina</taxon>
        <taxon>Eurotiomycetes</taxon>
        <taxon>Eurotiomycetidae</taxon>
        <taxon>Eurotiales</taxon>
        <taxon>Aspergillaceae</taxon>
        <taxon>Aspergillus</taxon>
        <taxon>Aspergillus subgen. Fumigati</taxon>
    </lineage>
</organism>
<dbReference type="EC" id="1.14.14.118" evidence="2"/>
<dbReference type="EMBL" id="DS027694">
    <property type="protein sequence ID" value="EAW19750.1"/>
    <property type="molecule type" value="Genomic_DNA"/>
</dbReference>
<dbReference type="RefSeq" id="XP_001261647.1">
    <property type="nucleotide sequence ID" value="XM_001261646.1"/>
</dbReference>
<dbReference type="SMR" id="A1DA60"/>
<dbReference type="STRING" id="331117.A1DA60"/>
<dbReference type="EnsemblFungi" id="EAW19750">
    <property type="protein sequence ID" value="EAW19750"/>
    <property type="gene ID" value="NFIA_093700"/>
</dbReference>
<dbReference type="GeneID" id="4588680"/>
<dbReference type="KEGG" id="nfi:NFIA_093700"/>
<dbReference type="VEuPathDB" id="FungiDB:NFIA_093700"/>
<dbReference type="eggNOG" id="KOG0157">
    <property type="taxonomic scope" value="Eukaryota"/>
</dbReference>
<dbReference type="HOGENOM" id="CLU_001570_14_10_1"/>
<dbReference type="OMA" id="KRIQVYR"/>
<dbReference type="OrthoDB" id="6692864at2759"/>
<dbReference type="Proteomes" id="UP000006702">
    <property type="component" value="Unassembled WGS sequence"/>
</dbReference>
<dbReference type="GO" id="GO:0016020">
    <property type="term" value="C:membrane"/>
    <property type="evidence" value="ECO:0007669"/>
    <property type="project" value="UniProtKB-SubCell"/>
</dbReference>
<dbReference type="GO" id="GO:0020037">
    <property type="term" value="F:heme binding"/>
    <property type="evidence" value="ECO:0007669"/>
    <property type="project" value="InterPro"/>
</dbReference>
<dbReference type="GO" id="GO:0005506">
    <property type="term" value="F:iron ion binding"/>
    <property type="evidence" value="ECO:0007669"/>
    <property type="project" value="InterPro"/>
</dbReference>
<dbReference type="GO" id="GO:0004497">
    <property type="term" value="F:monooxygenase activity"/>
    <property type="evidence" value="ECO:0007669"/>
    <property type="project" value="UniProtKB-KW"/>
</dbReference>
<dbReference type="GO" id="GO:0016705">
    <property type="term" value="F:oxidoreductase activity, acting on paired donors, with incorporation or reduction of molecular oxygen"/>
    <property type="evidence" value="ECO:0007669"/>
    <property type="project" value="InterPro"/>
</dbReference>
<dbReference type="GO" id="GO:0009820">
    <property type="term" value="P:alkaloid metabolic process"/>
    <property type="evidence" value="ECO:0007669"/>
    <property type="project" value="UniProtKB-KW"/>
</dbReference>
<dbReference type="GO" id="GO:0044283">
    <property type="term" value="P:small molecule biosynthetic process"/>
    <property type="evidence" value="ECO:0007669"/>
    <property type="project" value="UniProtKB-ARBA"/>
</dbReference>
<dbReference type="CDD" id="cd11061">
    <property type="entry name" value="CYP67-like"/>
    <property type="match status" value="1"/>
</dbReference>
<dbReference type="FunFam" id="1.10.630.10:FF:000063">
    <property type="entry name" value="Cytochrome P450 monooxygenase"/>
    <property type="match status" value="1"/>
</dbReference>
<dbReference type="Gene3D" id="1.10.630.10">
    <property type="entry name" value="Cytochrome P450"/>
    <property type="match status" value="1"/>
</dbReference>
<dbReference type="InterPro" id="IPR001128">
    <property type="entry name" value="Cyt_P450"/>
</dbReference>
<dbReference type="InterPro" id="IPR002401">
    <property type="entry name" value="Cyt_P450_E_grp-I"/>
</dbReference>
<dbReference type="InterPro" id="IPR036396">
    <property type="entry name" value="Cyt_P450_sf"/>
</dbReference>
<dbReference type="InterPro" id="IPR050121">
    <property type="entry name" value="Cytochrome_P450_monoxygenase"/>
</dbReference>
<dbReference type="PANTHER" id="PTHR24305">
    <property type="entry name" value="CYTOCHROME P450"/>
    <property type="match status" value="1"/>
</dbReference>
<dbReference type="PANTHER" id="PTHR24305:SF112">
    <property type="entry name" value="L-ORNITHINE-N5-MONOOXYGENASE (EUROFUNG)"/>
    <property type="match status" value="1"/>
</dbReference>
<dbReference type="Pfam" id="PF00067">
    <property type="entry name" value="p450"/>
    <property type="match status" value="1"/>
</dbReference>
<dbReference type="PRINTS" id="PR00463">
    <property type="entry name" value="EP450I"/>
</dbReference>
<dbReference type="PRINTS" id="PR00385">
    <property type="entry name" value="P450"/>
</dbReference>
<dbReference type="SUPFAM" id="SSF48264">
    <property type="entry name" value="Cytochrome P450"/>
    <property type="match status" value="1"/>
</dbReference>
<keyword id="KW-0017">Alkaloid metabolism</keyword>
<keyword id="KW-0349">Heme</keyword>
<keyword id="KW-0408">Iron</keyword>
<keyword id="KW-0472">Membrane</keyword>
<keyword id="KW-0479">Metal-binding</keyword>
<keyword id="KW-0503">Monooxygenase</keyword>
<keyword id="KW-0560">Oxidoreductase</keyword>
<keyword id="KW-1185">Reference proteome</keyword>
<keyword id="KW-0812">Transmembrane</keyword>
<keyword id="KW-1133">Transmembrane helix</keyword>
<keyword id="KW-0843">Virulence</keyword>
<accession>A1DA60</accession>
<reference key="1">
    <citation type="journal article" date="2008" name="PLoS Genet.">
        <title>Genomic islands in the pathogenic filamentous fungus Aspergillus fumigatus.</title>
        <authorList>
            <person name="Fedorova N.D."/>
            <person name="Khaldi N."/>
            <person name="Joardar V.S."/>
            <person name="Maiti R."/>
            <person name="Amedeo P."/>
            <person name="Anderson M.J."/>
            <person name="Crabtree J."/>
            <person name="Silva J.C."/>
            <person name="Badger J.H."/>
            <person name="Albarraq A."/>
            <person name="Angiuoli S."/>
            <person name="Bussey H."/>
            <person name="Bowyer P."/>
            <person name="Cotty P.J."/>
            <person name="Dyer P.S."/>
            <person name="Egan A."/>
            <person name="Galens K."/>
            <person name="Fraser-Liggett C.M."/>
            <person name="Haas B.J."/>
            <person name="Inman J.M."/>
            <person name="Kent R."/>
            <person name="Lemieux S."/>
            <person name="Malavazi I."/>
            <person name="Orvis J."/>
            <person name="Roemer T."/>
            <person name="Ronning C.M."/>
            <person name="Sundaram J.P."/>
            <person name="Sutton G."/>
            <person name="Turner G."/>
            <person name="Venter J.C."/>
            <person name="White O.R."/>
            <person name="Whitty B.R."/>
            <person name="Youngman P."/>
            <person name="Wolfe K.H."/>
            <person name="Goldman G.H."/>
            <person name="Wortman J.R."/>
            <person name="Jiang B."/>
            <person name="Denning D.W."/>
            <person name="Nierman W.C."/>
        </authorList>
    </citation>
    <scope>NUCLEOTIDE SEQUENCE [LARGE SCALE GENOMIC DNA]</scope>
    <source>
        <strain>ATCC 1020 / DSM 3700 / CBS 544.65 / FGSC A1164 / JCM 1740 / NRRL 181 / WB 181</strain>
    </source>
</reference>
<reference key="2">
    <citation type="journal article" date="2012" name="ChemBioChem">
        <title>Identification of the verruculogen prenyltransferase FtmPT3 by a combination of chemical, bioinformatic and biochemical approaches.</title>
        <authorList>
            <person name="Mundt K."/>
            <person name="Wollinsky B."/>
            <person name="Ruan H.L."/>
            <person name="Zhu T."/>
            <person name="Li S.M."/>
        </authorList>
    </citation>
    <scope>FUNCTION</scope>
</reference>
<gene>
    <name evidence="5" type="primary">ftmP450-1</name>
    <name evidence="2" type="synonym">ftmC</name>
    <name type="ORF">NFIA_093700</name>
</gene>
<comment type="function">
    <text evidence="2 4">Cytochrome P450 monooxygenase; part of the gene cluster that mediates the biosynthesis of fumitremorgins, indole alkaloids that carry not only intriguing chemical structures, but also interesting biological and pharmacological activities (PubMed:23109474). The biosynthesis of fumitremorgin-type alkaloids begins by condensation of the two amino acids L-tryptophan and L-proline to brevianamide F, catalyzed by the non-ribosomal peptide synthetase ftmPS/ftmA (By similarity). Brevianamide F is then prenylated by the prenyltransferase ftmPT1/ftmB in the presence of dimethylallyl diphosphate, resulting in the formation of tryprostatin B (By similarity). The three cytochrome P450 monooxygenases, ftmP450-1/ftmC, ftmP450-2/ftmE and ftmP450-3/FtmG, are responsible for the conversion of tryprostatin B to 6-hydroxytryprostatin B, tryprostatin A to fumitremorgin C and fumitremorgin C to 12,13-dihydroxyfumitremorgin C, respectively (By similarity). The putative methyltransferase ftmMT/ftmD is expected for the conversion of 6-hydroxytryprostatin B to tryprostatin A (By similarity). FtmPT2/FtmH catalyzes the prenylation of 12,13-dihydroxyfumitre-morgin C in the presence of dimethylallyl diphosphate, resulting in the formation of fumitremorgin B (By similarity). Fumitremorgin B is further converted to verruculogen by ftmOx1/ftmF via the insertion of an endoperoxide bond between the two prenyl moieties (By similarity). Finally, verruculogen is further converted to fumitremorgin A by the verruculogen prenyltransferase ftmPT3 (PubMed:23109474).</text>
</comment>
<comment type="catalytic activity">
    <reaction evidence="2">
        <text>tryprostatin B + reduced [NADPH--hemoprotein reductase] + O2 = 6-hydroxytryprostatin B + oxidized [NADPH--hemoprotein reductase] + H2O + H(+)</text>
        <dbReference type="Rhea" id="RHEA:35955"/>
        <dbReference type="Rhea" id="RHEA-COMP:11964"/>
        <dbReference type="Rhea" id="RHEA-COMP:11965"/>
        <dbReference type="ChEBI" id="CHEBI:15377"/>
        <dbReference type="ChEBI" id="CHEBI:15378"/>
        <dbReference type="ChEBI" id="CHEBI:15379"/>
        <dbReference type="ChEBI" id="CHEBI:57618"/>
        <dbReference type="ChEBI" id="CHEBI:58210"/>
        <dbReference type="ChEBI" id="CHEBI:72760"/>
        <dbReference type="ChEBI" id="CHEBI:72762"/>
        <dbReference type="EC" id="1.14.14.118"/>
    </reaction>
</comment>
<comment type="cofactor">
    <cofactor evidence="1">
        <name>heme</name>
        <dbReference type="ChEBI" id="CHEBI:30413"/>
    </cofactor>
</comment>
<comment type="pathway">
    <text evidence="2">Mycotoxin biosynthesis.</text>
</comment>
<comment type="subcellular location">
    <subcellularLocation>
        <location evidence="3">Membrane</location>
        <topology evidence="3">Multi-pass membrane protein</topology>
    </subcellularLocation>
</comment>
<comment type="similarity">
    <text evidence="6">Belongs to the cytochrome P450 family.</text>
</comment>